<keyword id="KW-0067">ATP-binding</keyword>
<keyword id="KW-0436">Ligase</keyword>
<keyword id="KW-0479">Metal-binding</keyword>
<keyword id="KW-0547">Nucleotide-binding</keyword>
<keyword id="KW-0671">Queuosine biosynthesis</keyword>
<keyword id="KW-0862">Zinc</keyword>
<evidence type="ECO:0000255" key="1">
    <source>
        <dbReference type="HAMAP-Rule" id="MF_01633"/>
    </source>
</evidence>
<protein>
    <recommendedName>
        <fullName evidence="1">7-cyano-7-deazaguanine synthase</fullName>
        <ecNumber evidence="1">6.3.4.20</ecNumber>
    </recommendedName>
    <alternativeName>
        <fullName evidence="1">7-cyano-7-carbaguanine synthase</fullName>
    </alternativeName>
    <alternativeName>
        <fullName evidence="1">PreQ(0) synthase</fullName>
    </alternativeName>
    <alternativeName>
        <fullName evidence="1">Queuosine biosynthesis protein QueC</fullName>
    </alternativeName>
</protein>
<name>QUEC_AERS4</name>
<sequence length="237" mass="26102">MNVKKAVVVFSGGQDSTTCLVQALAHYDEVHAITFDYGQRHREEIETARRLATQFGIAAHKVMDVTLLNELAVSALTRDEIPVSGELQDNGLPNTFVPGRNILFLTLASIYAYQVGAEAVITGVCETDFSGYPDCRDEFVKSLNQAVSLGLDRCIRFETPLMWLDKAETWALADYYGHLETVRQQTLTCYNGIAGDGCGTCPACELRSRGLDLYLADKAGIMARLYEKTGLCEKSVL</sequence>
<dbReference type="EC" id="6.3.4.20" evidence="1"/>
<dbReference type="EMBL" id="CP000644">
    <property type="protein sequence ID" value="ABO89854.1"/>
    <property type="molecule type" value="Genomic_DNA"/>
</dbReference>
<dbReference type="SMR" id="A4SLT2"/>
<dbReference type="STRING" id="29491.GCA_000820065_02987"/>
<dbReference type="KEGG" id="asa:ASA_1775"/>
<dbReference type="eggNOG" id="COG0603">
    <property type="taxonomic scope" value="Bacteria"/>
</dbReference>
<dbReference type="HOGENOM" id="CLU_081854_0_0_6"/>
<dbReference type="UniPathway" id="UPA00391"/>
<dbReference type="Proteomes" id="UP000000225">
    <property type="component" value="Chromosome"/>
</dbReference>
<dbReference type="GO" id="GO:0005524">
    <property type="term" value="F:ATP binding"/>
    <property type="evidence" value="ECO:0007669"/>
    <property type="project" value="UniProtKB-UniRule"/>
</dbReference>
<dbReference type="GO" id="GO:0016879">
    <property type="term" value="F:ligase activity, forming carbon-nitrogen bonds"/>
    <property type="evidence" value="ECO:0007669"/>
    <property type="project" value="UniProtKB-UniRule"/>
</dbReference>
<dbReference type="GO" id="GO:0008270">
    <property type="term" value="F:zinc ion binding"/>
    <property type="evidence" value="ECO:0007669"/>
    <property type="project" value="UniProtKB-UniRule"/>
</dbReference>
<dbReference type="GO" id="GO:0008616">
    <property type="term" value="P:queuosine biosynthetic process"/>
    <property type="evidence" value="ECO:0007669"/>
    <property type="project" value="UniProtKB-UniRule"/>
</dbReference>
<dbReference type="CDD" id="cd01995">
    <property type="entry name" value="QueC-like"/>
    <property type="match status" value="1"/>
</dbReference>
<dbReference type="FunFam" id="3.40.50.620:FF:000017">
    <property type="entry name" value="7-cyano-7-deazaguanine synthase"/>
    <property type="match status" value="1"/>
</dbReference>
<dbReference type="Gene3D" id="3.40.50.620">
    <property type="entry name" value="HUPs"/>
    <property type="match status" value="1"/>
</dbReference>
<dbReference type="HAMAP" id="MF_01633">
    <property type="entry name" value="QueC"/>
    <property type="match status" value="1"/>
</dbReference>
<dbReference type="InterPro" id="IPR018317">
    <property type="entry name" value="QueC"/>
</dbReference>
<dbReference type="InterPro" id="IPR014729">
    <property type="entry name" value="Rossmann-like_a/b/a_fold"/>
</dbReference>
<dbReference type="NCBIfam" id="TIGR00364">
    <property type="entry name" value="7-cyano-7-deazaguanine synthase QueC"/>
    <property type="match status" value="1"/>
</dbReference>
<dbReference type="NCBIfam" id="NF008317">
    <property type="entry name" value="PRK11106.1"/>
    <property type="match status" value="1"/>
</dbReference>
<dbReference type="PANTHER" id="PTHR42914">
    <property type="entry name" value="7-CYANO-7-DEAZAGUANINE SYNTHASE"/>
    <property type="match status" value="1"/>
</dbReference>
<dbReference type="PANTHER" id="PTHR42914:SF1">
    <property type="entry name" value="7-CYANO-7-DEAZAGUANINE SYNTHASE"/>
    <property type="match status" value="1"/>
</dbReference>
<dbReference type="Pfam" id="PF06508">
    <property type="entry name" value="QueC"/>
    <property type="match status" value="1"/>
</dbReference>
<dbReference type="PIRSF" id="PIRSF006293">
    <property type="entry name" value="ExsB"/>
    <property type="match status" value="1"/>
</dbReference>
<dbReference type="SUPFAM" id="SSF52402">
    <property type="entry name" value="Adenine nucleotide alpha hydrolases-like"/>
    <property type="match status" value="1"/>
</dbReference>
<reference key="1">
    <citation type="journal article" date="2008" name="BMC Genomics">
        <title>The genome of Aeromonas salmonicida subsp. salmonicida A449: insights into the evolution of a fish pathogen.</title>
        <authorList>
            <person name="Reith M.E."/>
            <person name="Singh R.K."/>
            <person name="Curtis B."/>
            <person name="Boyd J.M."/>
            <person name="Bouevitch A."/>
            <person name="Kimball J."/>
            <person name="Munholland J."/>
            <person name="Murphy C."/>
            <person name="Sarty D."/>
            <person name="Williams J."/>
            <person name="Nash J.H."/>
            <person name="Johnson S.C."/>
            <person name="Brown L.L."/>
        </authorList>
    </citation>
    <scope>NUCLEOTIDE SEQUENCE [LARGE SCALE GENOMIC DNA]</scope>
    <source>
        <strain>A449</strain>
    </source>
</reference>
<comment type="function">
    <text evidence="1">Catalyzes the ATP-dependent conversion of 7-carboxy-7-deazaguanine (CDG) to 7-cyano-7-deazaguanine (preQ(0)).</text>
</comment>
<comment type="catalytic activity">
    <reaction evidence="1">
        <text>7-carboxy-7-deazaguanine + NH4(+) + ATP = 7-cyano-7-deazaguanine + ADP + phosphate + H2O + H(+)</text>
        <dbReference type="Rhea" id="RHEA:27982"/>
        <dbReference type="ChEBI" id="CHEBI:15377"/>
        <dbReference type="ChEBI" id="CHEBI:15378"/>
        <dbReference type="ChEBI" id="CHEBI:28938"/>
        <dbReference type="ChEBI" id="CHEBI:30616"/>
        <dbReference type="ChEBI" id="CHEBI:43474"/>
        <dbReference type="ChEBI" id="CHEBI:45075"/>
        <dbReference type="ChEBI" id="CHEBI:61036"/>
        <dbReference type="ChEBI" id="CHEBI:456216"/>
        <dbReference type="EC" id="6.3.4.20"/>
    </reaction>
</comment>
<comment type="cofactor">
    <cofactor evidence="1">
        <name>Zn(2+)</name>
        <dbReference type="ChEBI" id="CHEBI:29105"/>
    </cofactor>
    <text evidence="1">Binds 1 zinc ion per subunit.</text>
</comment>
<comment type="pathway">
    <text evidence="1">Purine metabolism; 7-cyano-7-deazaguanine biosynthesis.</text>
</comment>
<comment type="similarity">
    <text evidence="1">Belongs to the QueC family.</text>
</comment>
<gene>
    <name evidence="1" type="primary">queC</name>
    <name type="ordered locus">ASA_1775</name>
</gene>
<organism>
    <name type="scientific">Aeromonas salmonicida (strain A449)</name>
    <dbReference type="NCBI Taxonomy" id="382245"/>
    <lineage>
        <taxon>Bacteria</taxon>
        <taxon>Pseudomonadati</taxon>
        <taxon>Pseudomonadota</taxon>
        <taxon>Gammaproteobacteria</taxon>
        <taxon>Aeromonadales</taxon>
        <taxon>Aeromonadaceae</taxon>
        <taxon>Aeromonas</taxon>
    </lineage>
</organism>
<feature type="chain" id="PRO_1000186546" description="7-cyano-7-deazaguanine synthase">
    <location>
        <begin position="1"/>
        <end position="237"/>
    </location>
</feature>
<feature type="binding site" evidence="1">
    <location>
        <begin position="10"/>
        <end position="20"/>
    </location>
    <ligand>
        <name>ATP</name>
        <dbReference type="ChEBI" id="CHEBI:30616"/>
    </ligand>
</feature>
<feature type="binding site" evidence="1">
    <location>
        <position position="189"/>
    </location>
    <ligand>
        <name>Zn(2+)</name>
        <dbReference type="ChEBI" id="CHEBI:29105"/>
    </ligand>
</feature>
<feature type="binding site" evidence="1">
    <location>
        <position position="198"/>
    </location>
    <ligand>
        <name>Zn(2+)</name>
        <dbReference type="ChEBI" id="CHEBI:29105"/>
    </ligand>
</feature>
<feature type="binding site" evidence="1">
    <location>
        <position position="201"/>
    </location>
    <ligand>
        <name>Zn(2+)</name>
        <dbReference type="ChEBI" id="CHEBI:29105"/>
    </ligand>
</feature>
<feature type="binding site" evidence="1">
    <location>
        <position position="204"/>
    </location>
    <ligand>
        <name>Zn(2+)</name>
        <dbReference type="ChEBI" id="CHEBI:29105"/>
    </ligand>
</feature>
<proteinExistence type="inferred from homology"/>
<accession>A4SLT2</accession>